<comment type="function">
    <text evidence="1">Together with its co-chaperonin GroES, plays an essential role in assisting protein folding. The GroEL-GroES system forms a nano-cage that allows encapsulation of the non-native substrate proteins and provides a physical environment optimized to promote and accelerate protein folding.</text>
</comment>
<comment type="catalytic activity">
    <reaction evidence="1">
        <text>ATP + H2O + a folded polypeptide = ADP + phosphate + an unfolded polypeptide.</text>
        <dbReference type="EC" id="5.6.1.7"/>
    </reaction>
</comment>
<comment type="subunit">
    <text evidence="1">Forms a cylinder of 14 subunits composed of two heptameric rings stacked back-to-back. Interacts with the co-chaperonin GroES.</text>
</comment>
<comment type="subcellular location">
    <subcellularLocation>
        <location evidence="1">Cytoplasm</location>
    </subcellularLocation>
</comment>
<comment type="similarity">
    <text evidence="1">Belongs to the chaperonin (HSP60) family.</text>
</comment>
<protein>
    <recommendedName>
        <fullName evidence="1">Chaperonin GroEL 3</fullName>
        <ecNumber evidence="1">5.6.1.7</ecNumber>
    </recommendedName>
    <alternativeName>
        <fullName evidence="1">60 kDa chaperonin 3</fullName>
    </alternativeName>
    <alternativeName>
        <fullName evidence="1">Chaperonin-60 3</fullName>
        <shortName evidence="1">Cpn60 3</shortName>
    </alternativeName>
</protein>
<feature type="chain" id="PRO_0000063496" description="Chaperonin GroEL 3">
    <location>
        <begin position="1"/>
        <end position="552"/>
    </location>
</feature>
<feature type="binding site" evidence="1">
    <location>
        <begin position="30"/>
        <end position="33"/>
    </location>
    <ligand>
        <name>ATP</name>
        <dbReference type="ChEBI" id="CHEBI:30616"/>
    </ligand>
</feature>
<feature type="binding site" evidence="1">
    <location>
        <position position="51"/>
    </location>
    <ligand>
        <name>ATP</name>
        <dbReference type="ChEBI" id="CHEBI:30616"/>
    </ligand>
</feature>
<feature type="binding site" evidence="1">
    <location>
        <begin position="87"/>
        <end position="91"/>
    </location>
    <ligand>
        <name>ATP</name>
        <dbReference type="ChEBI" id="CHEBI:30616"/>
    </ligand>
</feature>
<feature type="binding site" evidence="1">
    <location>
        <position position="415"/>
    </location>
    <ligand>
        <name>ATP</name>
        <dbReference type="ChEBI" id="CHEBI:30616"/>
    </ligand>
</feature>
<feature type="binding site" evidence="1">
    <location>
        <position position="495"/>
    </location>
    <ligand>
        <name>ATP</name>
        <dbReference type="ChEBI" id="CHEBI:30616"/>
    </ligand>
</feature>
<organism>
    <name type="scientific">Mesorhizobium japonicum (strain LMG 29417 / CECT 9101 / MAFF 303099)</name>
    <name type="common">Mesorhizobium loti (strain MAFF 303099)</name>
    <dbReference type="NCBI Taxonomy" id="266835"/>
    <lineage>
        <taxon>Bacteria</taxon>
        <taxon>Pseudomonadati</taxon>
        <taxon>Pseudomonadota</taxon>
        <taxon>Alphaproteobacteria</taxon>
        <taxon>Hyphomicrobiales</taxon>
        <taxon>Phyllobacteriaceae</taxon>
        <taxon>Mesorhizobium</taxon>
    </lineage>
</organism>
<sequence length="552" mass="57751">MAAKDVKFSRDARERMLRGVNILADAVKVTLGPKGRNVVIDKSFGAPRITKDGVTVAKEIELEDKFENMGAQMVREVASKTNDIAGDGTTTATVLAQSIVQEGHKAVAAGMNPMDLKRGIDLAVSDVVWTLIKNATKIKTSEEVAQVGTIAGNGDESVGKMIAEAMQKVGNEGVITVEEAKTAETELEVVEGMQFDRGYLSPYFVTNADKMVADLEDAYILLHEKKLSNLQAMLPVLEAVVQTSKPLLIISEDVEGEALATLVVNKLRGGLKIAAVKAPGFGDRRKAMLEDIAILTGGQVISEDLGIKLENVGLDMLGRAKKVSISKENTTIVDGAGKKEEIQGRVAQIKQQIEETTSDYDKEKLQERLAKLAGGVAVIRVGGATEVEVKEKKDRVDDALNATRAAVEEGIVPGGGVALLRASLSINAVGANSDQTAGISIVRRALQAPARQIAANAGAEASIVAGKILENKGATFGFNAQTGEYGDMIAMGIVDPVKVVRTALQDAASVAGLLVTTEAMIAEAPKKESAGGGGMPGGMGGGGMGGMGGMDF</sequence>
<keyword id="KW-0067">ATP-binding</keyword>
<keyword id="KW-0143">Chaperone</keyword>
<keyword id="KW-0963">Cytoplasm</keyword>
<keyword id="KW-0413">Isomerase</keyword>
<keyword id="KW-0547">Nucleotide-binding</keyword>
<name>CH603_RHILO</name>
<dbReference type="EC" id="5.6.1.7" evidence="1"/>
<dbReference type="EMBL" id="BA000012">
    <property type="protein sequence ID" value="BAB52193.1"/>
    <property type="molecule type" value="Genomic_DNA"/>
</dbReference>
<dbReference type="RefSeq" id="WP_010913528.1">
    <property type="nucleotide sequence ID" value="NC_002678.2"/>
</dbReference>
<dbReference type="SMR" id="Q98AX9"/>
<dbReference type="KEGG" id="mlo:mll5810"/>
<dbReference type="PATRIC" id="fig|266835.9.peg.4622"/>
<dbReference type="eggNOG" id="COG0459">
    <property type="taxonomic scope" value="Bacteria"/>
</dbReference>
<dbReference type="HOGENOM" id="CLU_016503_3_0_5"/>
<dbReference type="Proteomes" id="UP000000552">
    <property type="component" value="Chromosome"/>
</dbReference>
<dbReference type="GO" id="GO:0005737">
    <property type="term" value="C:cytoplasm"/>
    <property type="evidence" value="ECO:0007669"/>
    <property type="project" value="UniProtKB-SubCell"/>
</dbReference>
<dbReference type="GO" id="GO:0005524">
    <property type="term" value="F:ATP binding"/>
    <property type="evidence" value="ECO:0007669"/>
    <property type="project" value="UniProtKB-UniRule"/>
</dbReference>
<dbReference type="GO" id="GO:0140662">
    <property type="term" value="F:ATP-dependent protein folding chaperone"/>
    <property type="evidence" value="ECO:0007669"/>
    <property type="project" value="InterPro"/>
</dbReference>
<dbReference type="GO" id="GO:0016853">
    <property type="term" value="F:isomerase activity"/>
    <property type="evidence" value="ECO:0007669"/>
    <property type="project" value="UniProtKB-KW"/>
</dbReference>
<dbReference type="GO" id="GO:0051082">
    <property type="term" value="F:unfolded protein binding"/>
    <property type="evidence" value="ECO:0007669"/>
    <property type="project" value="UniProtKB-UniRule"/>
</dbReference>
<dbReference type="GO" id="GO:0042026">
    <property type="term" value="P:protein refolding"/>
    <property type="evidence" value="ECO:0007669"/>
    <property type="project" value="UniProtKB-UniRule"/>
</dbReference>
<dbReference type="CDD" id="cd03344">
    <property type="entry name" value="GroEL"/>
    <property type="match status" value="1"/>
</dbReference>
<dbReference type="FunFam" id="1.10.560.10:FF:000001">
    <property type="entry name" value="60 kDa chaperonin"/>
    <property type="match status" value="1"/>
</dbReference>
<dbReference type="FunFam" id="3.50.7.10:FF:000001">
    <property type="entry name" value="60 kDa chaperonin"/>
    <property type="match status" value="1"/>
</dbReference>
<dbReference type="Gene3D" id="3.50.7.10">
    <property type="entry name" value="GroEL"/>
    <property type="match status" value="1"/>
</dbReference>
<dbReference type="Gene3D" id="1.10.560.10">
    <property type="entry name" value="GroEL-like equatorial domain"/>
    <property type="match status" value="1"/>
</dbReference>
<dbReference type="Gene3D" id="3.30.260.10">
    <property type="entry name" value="TCP-1-like chaperonin intermediate domain"/>
    <property type="match status" value="1"/>
</dbReference>
<dbReference type="HAMAP" id="MF_00600">
    <property type="entry name" value="CH60"/>
    <property type="match status" value="1"/>
</dbReference>
<dbReference type="InterPro" id="IPR018370">
    <property type="entry name" value="Chaperonin_Cpn60_CS"/>
</dbReference>
<dbReference type="InterPro" id="IPR001844">
    <property type="entry name" value="Cpn60/GroEL"/>
</dbReference>
<dbReference type="InterPro" id="IPR002423">
    <property type="entry name" value="Cpn60/GroEL/TCP-1"/>
</dbReference>
<dbReference type="InterPro" id="IPR027409">
    <property type="entry name" value="GroEL-like_apical_dom_sf"/>
</dbReference>
<dbReference type="InterPro" id="IPR027413">
    <property type="entry name" value="GROEL-like_equatorial_sf"/>
</dbReference>
<dbReference type="InterPro" id="IPR027410">
    <property type="entry name" value="TCP-1-like_intermed_sf"/>
</dbReference>
<dbReference type="NCBIfam" id="TIGR02348">
    <property type="entry name" value="GroEL"/>
    <property type="match status" value="1"/>
</dbReference>
<dbReference type="NCBIfam" id="NF000592">
    <property type="entry name" value="PRK00013.1"/>
    <property type="match status" value="1"/>
</dbReference>
<dbReference type="NCBIfam" id="NF009487">
    <property type="entry name" value="PRK12849.1"/>
    <property type="match status" value="1"/>
</dbReference>
<dbReference type="NCBIfam" id="NF009488">
    <property type="entry name" value="PRK12850.1"/>
    <property type="match status" value="1"/>
</dbReference>
<dbReference type="NCBIfam" id="NF009489">
    <property type="entry name" value="PRK12851.1"/>
    <property type="match status" value="1"/>
</dbReference>
<dbReference type="PANTHER" id="PTHR45633">
    <property type="entry name" value="60 KDA HEAT SHOCK PROTEIN, MITOCHONDRIAL"/>
    <property type="match status" value="1"/>
</dbReference>
<dbReference type="Pfam" id="PF00118">
    <property type="entry name" value="Cpn60_TCP1"/>
    <property type="match status" value="1"/>
</dbReference>
<dbReference type="PRINTS" id="PR00298">
    <property type="entry name" value="CHAPERONIN60"/>
</dbReference>
<dbReference type="SUPFAM" id="SSF52029">
    <property type="entry name" value="GroEL apical domain-like"/>
    <property type="match status" value="1"/>
</dbReference>
<dbReference type="SUPFAM" id="SSF48592">
    <property type="entry name" value="GroEL equatorial domain-like"/>
    <property type="match status" value="1"/>
</dbReference>
<dbReference type="SUPFAM" id="SSF54849">
    <property type="entry name" value="GroEL-intermediate domain like"/>
    <property type="match status" value="1"/>
</dbReference>
<dbReference type="PROSITE" id="PS00296">
    <property type="entry name" value="CHAPERONINS_CPN60"/>
    <property type="match status" value="1"/>
</dbReference>
<reference key="1">
    <citation type="journal article" date="2000" name="DNA Res.">
        <title>Complete genome structure of the nitrogen-fixing symbiotic bacterium Mesorhizobium loti.</title>
        <authorList>
            <person name="Kaneko T."/>
            <person name="Nakamura Y."/>
            <person name="Sato S."/>
            <person name="Asamizu E."/>
            <person name="Kato T."/>
            <person name="Sasamoto S."/>
            <person name="Watanabe A."/>
            <person name="Idesawa K."/>
            <person name="Ishikawa A."/>
            <person name="Kawashima K."/>
            <person name="Kimura T."/>
            <person name="Kishida Y."/>
            <person name="Kiyokawa C."/>
            <person name="Kohara M."/>
            <person name="Matsumoto M."/>
            <person name="Matsuno A."/>
            <person name="Mochizuki Y."/>
            <person name="Nakayama S."/>
            <person name="Nakazaki N."/>
            <person name="Shimpo S."/>
            <person name="Sugimoto M."/>
            <person name="Takeuchi C."/>
            <person name="Yamada M."/>
            <person name="Tabata S."/>
        </authorList>
    </citation>
    <scope>NUCLEOTIDE SEQUENCE [LARGE SCALE GENOMIC DNA]</scope>
    <source>
        <strain>LMG 29417 / CECT 9101 / MAFF 303099</strain>
    </source>
</reference>
<evidence type="ECO:0000255" key="1">
    <source>
        <dbReference type="HAMAP-Rule" id="MF_00600"/>
    </source>
</evidence>
<accession>Q98AX9</accession>
<gene>
    <name evidence="1" type="primary">groEL3</name>
    <name evidence="1" type="synonym">groL3</name>
    <name type="ordered locus">mll5810</name>
</gene>
<proteinExistence type="inferred from homology"/>